<gene>
    <name evidence="1" type="primary">mutL</name>
    <name type="ordered locus">BWG_3882</name>
</gene>
<sequence length="615" mass="67924">MPIQVLPPQLANQIAAGEVVERPASVVKELVENSLDAGATRIDIDIERGGAKLIRIRDNGCGIKKDELALALARHATSKIASLDDLEAIISLGFRGEALASISSVSRLTLTSRTAEQQEAWQAYAEGRDMNVTVKPAAHPVGTTLEVLDLFYNTPARRKFLRTEKTEFNHIDEIIRRIALARFDVTINLSHNGKIVRQYRAVPEGGQKERRLGAICGTAFLEQALAIEWQHGDLTLRGWVADPNHTTPALAEIQYCYVNGRMMRDRLINHAIRQACEDKLGADQQPAFVLYLEIDPHQVDVNVHPAKHEVRFHQSRLVHDFIYQGVLSVLQQQLETPLPLDDEPQPAPRSIPENRVAAGRNHFAEPAAREPVAPRYTPAPASGSRPAAPWPNAQPGYQKQQGEVYRQLLQTPAPMQKLKAPEPQEPALAANSQSFGRVLTIVHSDCALLERDGNISLLSLPVAERWLRQAQLTPGEAPVCAQPLLIPLRLKVSAEEKSALEKAQSALAELGIDFQSDAQHVTIRAVPLPLRQQNLQILIPELIGYLAKQSVFEPGNIAQWIARNLMSEHAQWSMAQAITLLADVERLCPQLVKTPPGGLLQSVDLHPAIKALKDE</sequence>
<accession>C5A1G1</accession>
<proteinExistence type="inferred from homology"/>
<reference key="1">
    <citation type="journal article" date="2009" name="J. Bacteriol.">
        <title>Genomic sequencing reveals regulatory mutations and recombinational events in the widely used MC4100 lineage of Escherichia coli K-12.</title>
        <authorList>
            <person name="Ferenci T."/>
            <person name="Zhou Z."/>
            <person name="Betteridge T."/>
            <person name="Ren Y."/>
            <person name="Liu Y."/>
            <person name="Feng L."/>
            <person name="Reeves P.R."/>
            <person name="Wang L."/>
        </authorList>
    </citation>
    <scope>NUCLEOTIDE SEQUENCE [LARGE SCALE GENOMIC DNA]</scope>
    <source>
        <strain>K12 / MC4100 / BW2952</strain>
    </source>
</reference>
<evidence type="ECO:0000255" key="1">
    <source>
        <dbReference type="HAMAP-Rule" id="MF_00149"/>
    </source>
</evidence>
<evidence type="ECO:0000256" key="2">
    <source>
        <dbReference type="SAM" id="MobiDB-lite"/>
    </source>
</evidence>
<dbReference type="EMBL" id="CP001396">
    <property type="protein sequence ID" value="ACR63765.1"/>
    <property type="molecule type" value="Genomic_DNA"/>
</dbReference>
<dbReference type="RefSeq" id="WP_001122505.1">
    <property type="nucleotide sequence ID" value="NC_012759.1"/>
</dbReference>
<dbReference type="SMR" id="C5A1G1"/>
<dbReference type="KEGG" id="ebw:BWG_3882"/>
<dbReference type="HOGENOM" id="CLU_004131_5_1_6"/>
<dbReference type="GO" id="GO:0032300">
    <property type="term" value="C:mismatch repair complex"/>
    <property type="evidence" value="ECO:0007669"/>
    <property type="project" value="InterPro"/>
</dbReference>
<dbReference type="GO" id="GO:0005524">
    <property type="term" value="F:ATP binding"/>
    <property type="evidence" value="ECO:0007669"/>
    <property type="project" value="InterPro"/>
</dbReference>
<dbReference type="GO" id="GO:0016887">
    <property type="term" value="F:ATP hydrolysis activity"/>
    <property type="evidence" value="ECO:0007669"/>
    <property type="project" value="InterPro"/>
</dbReference>
<dbReference type="GO" id="GO:0140664">
    <property type="term" value="F:ATP-dependent DNA damage sensor activity"/>
    <property type="evidence" value="ECO:0007669"/>
    <property type="project" value="InterPro"/>
</dbReference>
<dbReference type="GO" id="GO:0030983">
    <property type="term" value="F:mismatched DNA binding"/>
    <property type="evidence" value="ECO:0007669"/>
    <property type="project" value="InterPro"/>
</dbReference>
<dbReference type="GO" id="GO:0006298">
    <property type="term" value="P:mismatch repair"/>
    <property type="evidence" value="ECO:0007669"/>
    <property type="project" value="UniProtKB-UniRule"/>
</dbReference>
<dbReference type="CDD" id="cd16926">
    <property type="entry name" value="HATPase_MutL-MLH-PMS-like"/>
    <property type="match status" value="1"/>
</dbReference>
<dbReference type="CDD" id="cd03482">
    <property type="entry name" value="MutL_Trans_MutL"/>
    <property type="match status" value="1"/>
</dbReference>
<dbReference type="FunFam" id="3.30.230.10:FF:000013">
    <property type="entry name" value="DNA mismatch repair endonuclease MutL"/>
    <property type="match status" value="1"/>
</dbReference>
<dbReference type="FunFam" id="3.30.565.10:FF:000003">
    <property type="entry name" value="DNA mismatch repair endonuclease MutL"/>
    <property type="match status" value="1"/>
</dbReference>
<dbReference type="FunFam" id="3.30.1370.100:FF:000002">
    <property type="entry name" value="DNA mismatch repair protein MutL"/>
    <property type="match status" value="1"/>
</dbReference>
<dbReference type="Gene3D" id="3.30.230.10">
    <property type="match status" value="1"/>
</dbReference>
<dbReference type="Gene3D" id="3.30.565.10">
    <property type="entry name" value="Histidine kinase-like ATPase, C-terminal domain"/>
    <property type="match status" value="1"/>
</dbReference>
<dbReference type="Gene3D" id="3.30.1540.20">
    <property type="entry name" value="MutL, C-terminal domain, dimerisation subdomain"/>
    <property type="match status" value="1"/>
</dbReference>
<dbReference type="Gene3D" id="3.30.1370.100">
    <property type="entry name" value="MutL, C-terminal domain, regulatory subdomain"/>
    <property type="match status" value="1"/>
</dbReference>
<dbReference type="HAMAP" id="MF_00149">
    <property type="entry name" value="DNA_mis_repair"/>
    <property type="match status" value="1"/>
</dbReference>
<dbReference type="InterPro" id="IPR014762">
    <property type="entry name" value="DNA_mismatch_repair_CS"/>
</dbReference>
<dbReference type="InterPro" id="IPR020667">
    <property type="entry name" value="DNA_mismatch_repair_MutL"/>
</dbReference>
<dbReference type="InterPro" id="IPR013507">
    <property type="entry name" value="DNA_mismatch_S5_2-like"/>
</dbReference>
<dbReference type="InterPro" id="IPR036890">
    <property type="entry name" value="HATPase_C_sf"/>
</dbReference>
<dbReference type="InterPro" id="IPR002099">
    <property type="entry name" value="MutL/Mlh/PMS"/>
</dbReference>
<dbReference type="InterPro" id="IPR038973">
    <property type="entry name" value="MutL/Mlh/Pms-like"/>
</dbReference>
<dbReference type="InterPro" id="IPR014790">
    <property type="entry name" value="MutL_C"/>
</dbReference>
<dbReference type="InterPro" id="IPR042120">
    <property type="entry name" value="MutL_C_dimsub"/>
</dbReference>
<dbReference type="InterPro" id="IPR042121">
    <property type="entry name" value="MutL_C_regsub"/>
</dbReference>
<dbReference type="InterPro" id="IPR037198">
    <property type="entry name" value="MutL_C_sf"/>
</dbReference>
<dbReference type="InterPro" id="IPR020568">
    <property type="entry name" value="Ribosomal_Su5_D2-typ_SF"/>
</dbReference>
<dbReference type="InterPro" id="IPR014721">
    <property type="entry name" value="Ribsml_uS5_D2-typ_fold_subgr"/>
</dbReference>
<dbReference type="NCBIfam" id="TIGR00585">
    <property type="entry name" value="mutl"/>
    <property type="match status" value="1"/>
</dbReference>
<dbReference type="NCBIfam" id="NF000948">
    <property type="entry name" value="PRK00095.1-1"/>
    <property type="match status" value="1"/>
</dbReference>
<dbReference type="PANTHER" id="PTHR10073">
    <property type="entry name" value="DNA MISMATCH REPAIR PROTEIN MLH, PMS, MUTL"/>
    <property type="match status" value="1"/>
</dbReference>
<dbReference type="PANTHER" id="PTHR10073:SF12">
    <property type="entry name" value="DNA MISMATCH REPAIR PROTEIN MLH1"/>
    <property type="match status" value="1"/>
</dbReference>
<dbReference type="Pfam" id="PF01119">
    <property type="entry name" value="DNA_mis_repair"/>
    <property type="match status" value="1"/>
</dbReference>
<dbReference type="Pfam" id="PF13589">
    <property type="entry name" value="HATPase_c_3"/>
    <property type="match status" value="1"/>
</dbReference>
<dbReference type="Pfam" id="PF08676">
    <property type="entry name" value="MutL_C"/>
    <property type="match status" value="1"/>
</dbReference>
<dbReference type="SMART" id="SM01340">
    <property type="entry name" value="DNA_mis_repair"/>
    <property type="match status" value="1"/>
</dbReference>
<dbReference type="SMART" id="SM00853">
    <property type="entry name" value="MutL_C"/>
    <property type="match status" value="1"/>
</dbReference>
<dbReference type="SUPFAM" id="SSF55874">
    <property type="entry name" value="ATPase domain of HSP90 chaperone/DNA topoisomerase II/histidine kinase"/>
    <property type="match status" value="1"/>
</dbReference>
<dbReference type="SUPFAM" id="SSF118116">
    <property type="entry name" value="DNA mismatch repair protein MutL"/>
    <property type="match status" value="1"/>
</dbReference>
<dbReference type="SUPFAM" id="SSF54211">
    <property type="entry name" value="Ribosomal protein S5 domain 2-like"/>
    <property type="match status" value="1"/>
</dbReference>
<dbReference type="PROSITE" id="PS00058">
    <property type="entry name" value="DNA_MISMATCH_REPAIR_1"/>
    <property type="match status" value="1"/>
</dbReference>
<feature type="chain" id="PRO_1000203384" description="DNA mismatch repair protein MutL">
    <location>
        <begin position="1"/>
        <end position="615"/>
    </location>
</feature>
<feature type="region of interest" description="Disordered" evidence="2">
    <location>
        <begin position="363"/>
        <end position="397"/>
    </location>
</feature>
<feature type="compositionally biased region" description="Low complexity" evidence="2">
    <location>
        <begin position="364"/>
        <end position="391"/>
    </location>
</feature>
<comment type="function">
    <text evidence="1">This protein is involved in the repair of mismatches in DNA. It is required for dam-dependent methyl-directed DNA mismatch repair. May act as a 'molecular matchmaker', a protein that promotes the formation of a stable complex between two or more DNA-binding proteins in an ATP-dependent manner without itself being part of a final effector complex.</text>
</comment>
<comment type="similarity">
    <text evidence="1">Belongs to the DNA mismatch repair MutL/HexB family.</text>
</comment>
<organism>
    <name type="scientific">Escherichia coli (strain K12 / MC4100 / BW2952)</name>
    <dbReference type="NCBI Taxonomy" id="595496"/>
    <lineage>
        <taxon>Bacteria</taxon>
        <taxon>Pseudomonadati</taxon>
        <taxon>Pseudomonadota</taxon>
        <taxon>Gammaproteobacteria</taxon>
        <taxon>Enterobacterales</taxon>
        <taxon>Enterobacteriaceae</taxon>
        <taxon>Escherichia</taxon>
    </lineage>
</organism>
<name>MUTL_ECOBW</name>
<protein>
    <recommendedName>
        <fullName evidence="1">DNA mismatch repair protein MutL</fullName>
    </recommendedName>
</protein>
<keyword id="KW-0227">DNA damage</keyword>
<keyword id="KW-0234">DNA repair</keyword>